<evidence type="ECO:0000255" key="1">
    <source>
        <dbReference type="HAMAP-Rule" id="MF_00368"/>
    </source>
</evidence>
<evidence type="ECO:0000305" key="2"/>
<keyword id="KW-1185">Reference proteome</keyword>
<keyword id="KW-0687">Ribonucleoprotein</keyword>
<keyword id="KW-0689">Ribosomal protein</keyword>
<organism>
    <name type="scientific">Chlorobium phaeobacteroides (strain DSM 266 / SMG 266 / 2430)</name>
    <dbReference type="NCBI Taxonomy" id="290317"/>
    <lineage>
        <taxon>Bacteria</taxon>
        <taxon>Pseudomonadati</taxon>
        <taxon>Chlorobiota</taxon>
        <taxon>Chlorobiia</taxon>
        <taxon>Chlorobiales</taxon>
        <taxon>Chlorobiaceae</taxon>
        <taxon>Chlorobium/Pelodictyon group</taxon>
        <taxon>Chlorobium</taxon>
    </lineage>
</organism>
<comment type="function">
    <text evidence="1">Forms part of the ribosomal stalk which helps the ribosome interact with GTP-bound translation factors. Is thus essential for accurate translation.</text>
</comment>
<comment type="subunit">
    <text evidence="1">Homodimer. Part of the ribosomal stalk of the 50S ribosomal subunit. Forms a multimeric L10(L12)X complex, where L10 forms an elongated spine to which 2 to 4 L12 dimers bind in a sequential fashion. Binds GTP-bound translation factors.</text>
</comment>
<comment type="similarity">
    <text evidence="1">Belongs to the bacterial ribosomal protein bL12 family.</text>
</comment>
<protein>
    <recommendedName>
        <fullName evidence="1">Large ribosomal subunit protein bL12</fullName>
    </recommendedName>
    <alternativeName>
        <fullName evidence="2">50S ribosomal protein L7/L12</fullName>
    </alternativeName>
</protein>
<reference key="1">
    <citation type="submission" date="2006-12" db="EMBL/GenBank/DDBJ databases">
        <title>Complete sequence of Chlorobium phaeobacteroides DSM 266.</title>
        <authorList>
            <consortium name="US DOE Joint Genome Institute"/>
            <person name="Copeland A."/>
            <person name="Lucas S."/>
            <person name="Lapidus A."/>
            <person name="Barry K."/>
            <person name="Detter J.C."/>
            <person name="Glavina del Rio T."/>
            <person name="Hammon N."/>
            <person name="Israni S."/>
            <person name="Pitluck S."/>
            <person name="Goltsman E."/>
            <person name="Schmutz J."/>
            <person name="Larimer F."/>
            <person name="Land M."/>
            <person name="Hauser L."/>
            <person name="Mikhailova N."/>
            <person name="Li T."/>
            <person name="Overmann J."/>
            <person name="Bryant D.A."/>
            <person name="Richardson P."/>
        </authorList>
    </citation>
    <scope>NUCLEOTIDE SEQUENCE [LARGE SCALE GENOMIC DNA]</scope>
    <source>
        <strain>DSM 266 / SMG 266 / 2430</strain>
    </source>
</reference>
<gene>
    <name evidence="1" type="primary">rplL</name>
    <name type="ordered locus">Cpha266_0232</name>
</gene>
<accession>A1BD22</accession>
<sequence length="125" mass="12966">MSIETLVEEIGKLTLTEASELVKALEEKFGVSAAPAMMAGVMAAAPAGDAPAQEEKTEFDVVLTAAGESKINVIKVVRALTGLGLKEAKDLVDGAPKTVKEGISKDEAEKVAKELKDVGASVELK</sequence>
<feature type="chain" id="PRO_1000006984" description="Large ribosomal subunit protein bL12">
    <location>
        <begin position="1"/>
        <end position="125"/>
    </location>
</feature>
<dbReference type="EMBL" id="CP000492">
    <property type="protein sequence ID" value="ABL64299.1"/>
    <property type="molecule type" value="Genomic_DNA"/>
</dbReference>
<dbReference type="RefSeq" id="WP_011744139.1">
    <property type="nucleotide sequence ID" value="NC_008639.1"/>
</dbReference>
<dbReference type="SMR" id="A1BD22"/>
<dbReference type="STRING" id="290317.Cpha266_0232"/>
<dbReference type="KEGG" id="cph:Cpha266_0232"/>
<dbReference type="eggNOG" id="COG0222">
    <property type="taxonomic scope" value="Bacteria"/>
</dbReference>
<dbReference type="HOGENOM" id="CLU_086499_3_2_10"/>
<dbReference type="OrthoDB" id="9811748at2"/>
<dbReference type="Proteomes" id="UP000008701">
    <property type="component" value="Chromosome"/>
</dbReference>
<dbReference type="GO" id="GO:0022625">
    <property type="term" value="C:cytosolic large ribosomal subunit"/>
    <property type="evidence" value="ECO:0007669"/>
    <property type="project" value="TreeGrafter"/>
</dbReference>
<dbReference type="GO" id="GO:0003729">
    <property type="term" value="F:mRNA binding"/>
    <property type="evidence" value="ECO:0007669"/>
    <property type="project" value="TreeGrafter"/>
</dbReference>
<dbReference type="GO" id="GO:0003735">
    <property type="term" value="F:structural constituent of ribosome"/>
    <property type="evidence" value="ECO:0007669"/>
    <property type="project" value="InterPro"/>
</dbReference>
<dbReference type="GO" id="GO:0006412">
    <property type="term" value="P:translation"/>
    <property type="evidence" value="ECO:0007669"/>
    <property type="project" value="UniProtKB-UniRule"/>
</dbReference>
<dbReference type="CDD" id="cd00387">
    <property type="entry name" value="Ribosomal_L7_L12"/>
    <property type="match status" value="1"/>
</dbReference>
<dbReference type="FunFam" id="3.30.1390.10:FF:000001">
    <property type="entry name" value="50S ribosomal protein L7/L12"/>
    <property type="match status" value="1"/>
</dbReference>
<dbReference type="Gene3D" id="3.30.1390.10">
    <property type="match status" value="1"/>
</dbReference>
<dbReference type="Gene3D" id="1.20.5.710">
    <property type="entry name" value="Single helix bin"/>
    <property type="match status" value="1"/>
</dbReference>
<dbReference type="HAMAP" id="MF_00368">
    <property type="entry name" value="Ribosomal_bL12"/>
    <property type="match status" value="1"/>
</dbReference>
<dbReference type="InterPro" id="IPR000206">
    <property type="entry name" value="Ribosomal_bL12"/>
</dbReference>
<dbReference type="InterPro" id="IPR013823">
    <property type="entry name" value="Ribosomal_bL12_C"/>
</dbReference>
<dbReference type="InterPro" id="IPR014719">
    <property type="entry name" value="Ribosomal_bL12_C/ClpS-like"/>
</dbReference>
<dbReference type="InterPro" id="IPR008932">
    <property type="entry name" value="Ribosomal_bL12_oligo"/>
</dbReference>
<dbReference type="InterPro" id="IPR036235">
    <property type="entry name" value="Ribosomal_bL12_oligo_N_sf"/>
</dbReference>
<dbReference type="NCBIfam" id="TIGR00855">
    <property type="entry name" value="L12"/>
    <property type="match status" value="1"/>
</dbReference>
<dbReference type="PANTHER" id="PTHR45987">
    <property type="entry name" value="39S RIBOSOMAL PROTEIN L12"/>
    <property type="match status" value="1"/>
</dbReference>
<dbReference type="PANTHER" id="PTHR45987:SF4">
    <property type="entry name" value="LARGE RIBOSOMAL SUBUNIT PROTEIN BL12M"/>
    <property type="match status" value="1"/>
</dbReference>
<dbReference type="Pfam" id="PF00542">
    <property type="entry name" value="Ribosomal_L12"/>
    <property type="match status" value="1"/>
</dbReference>
<dbReference type="Pfam" id="PF16320">
    <property type="entry name" value="Ribosomal_L12_N"/>
    <property type="match status" value="1"/>
</dbReference>
<dbReference type="SUPFAM" id="SSF54736">
    <property type="entry name" value="ClpS-like"/>
    <property type="match status" value="1"/>
</dbReference>
<dbReference type="SUPFAM" id="SSF48300">
    <property type="entry name" value="Ribosomal protein L7/12, oligomerisation (N-terminal) domain"/>
    <property type="match status" value="1"/>
</dbReference>
<name>RL7_CHLPD</name>
<proteinExistence type="inferred from homology"/>